<evidence type="ECO:0000255" key="1">
    <source>
        <dbReference type="HAMAP-Rule" id="MF_00361"/>
    </source>
</evidence>
<gene>
    <name evidence="1" type="primary">nadK</name>
    <name type="ordered locus">MAP_1402</name>
</gene>
<organism>
    <name type="scientific">Mycolicibacterium paratuberculosis (strain ATCC BAA-968 / K-10)</name>
    <name type="common">Mycobacterium paratuberculosis</name>
    <dbReference type="NCBI Taxonomy" id="262316"/>
    <lineage>
        <taxon>Bacteria</taxon>
        <taxon>Bacillati</taxon>
        <taxon>Actinomycetota</taxon>
        <taxon>Actinomycetes</taxon>
        <taxon>Mycobacteriales</taxon>
        <taxon>Mycobacteriaceae</taxon>
        <taxon>Mycobacterium</taxon>
        <taxon>Mycobacterium avium complex (MAC)</taxon>
    </lineage>
</organism>
<sequence length="308" mass="33029">MTPAERTVLMVVHTGREEATETARRVQKVLGDNGIALRVLSAEAVDRGPLHLAPDDMRAMGVEIEVVDADPLAARGCELVLVLGGDGTFLRAAELARNADIPVLGVNLGRIGFLAEAEAEAIDKVLEHVVARDYRVENRMTLDVVVRHQGTVSDHGWALNEVSLEKGPRLGVLGVVVEIDGRPVSAFGCDGVLVSTPTGSTAYAFSAGGPVLWPDLEAILVVPNNAHALFGRPMVTSPAATIAIEIEADGHDALVFCDGRREMLIPAGSRIEVKRCDTAVKWARLDSAPFTDRLVRKFRLPVTGWRGN</sequence>
<proteinExistence type="inferred from homology"/>
<dbReference type="EC" id="2.7.1.23" evidence="1"/>
<dbReference type="EMBL" id="AE016958">
    <property type="protein sequence ID" value="AAS03719.1"/>
    <property type="molecule type" value="Genomic_DNA"/>
</dbReference>
<dbReference type="RefSeq" id="WP_003876316.1">
    <property type="nucleotide sequence ID" value="NC_002944.2"/>
</dbReference>
<dbReference type="SMR" id="Q740E9"/>
<dbReference type="STRING" id="262316.MAP_1402"/>
<dbReference type="KEGG" id="mpa:MAP_1402"/>
<dbReference type="eggNOG" id="COG0061">
    <property type="taxonomic scope" value="Bacteria"/>
</dbReference>
<dbReference type="HOGENOM" id="CLU_008831_0_0_11"/>
<dbReference type="Proteomes" id="UP000000580">
    <property type="component" value="Chromosome"/>
</dbReference>
<dbReference type="GO" id="GO:0005737">
    <property type="term" value="C:cytoplasm"/>
    <property type="evidence" value="ECO:0007669"/>
    <property type="project" value="UniProtKB-SubCell"/>
</dbReference>
<dbReference type="GO" id="GO:0005524">
    <property type="term" value="F:ATP binding"/>
    <property type="evidence" value="ECO:0007669"/>
    <property type="project" value="UniProtKB-KW"/>
</dbReference>
<dbReference type="GO" id="GO:0046872">
    <property type="term" value="F:metal ion binding"/>
    <property type="evidence" value="ECO:0007669"/>
    <property type="project" value="UniProtKB-UniRule"/>
</dbReference>
<dbReference type="GO" id="GO:0051287">
    <property type="term" value="F:NAD binding"/>
    <property type="evidence" value="ECO:0007669"/>
    <property type="project" value="UniProtKB-ARBA"/>
</dbReference>
<dbReference type="GO" id="GO:0003951">
    <property type="term" value="F:NAD+ kinase activity"/>
    <property type="evidence" value="ECO:0007669"/>
    <property type="project" value="UniProtKB-UniRule"/>
</dbReference>
<dbReference type="GO" id="GO:0019674">
    <property type="term" value="P:NAD metabolic process"/>
    <property type="evidence" value="ECO:0007669"/>
    <property type="project" value="InterPro"/>
</dbReference>
<dbReference type="GO" id="GO:0006741">
    <property type="term" value="P:NADP biosynthetic process"/>
    <property type="evidence" value="ECO:0007669"/>
    <property type="project" value="UniProtKB-UniRule"/>
</dbReference>
<dbReference type="FunFam" id="2.60.200.30:FF:000007">
    <property type="entry name" value="NAD kinase"/>
    <property type="match status" value="1"/>
</dbReference>
<dbReference type="Gene3D" id="3.40.50.10330">
    <property type="entry name" value="Probable inorganic polyphosphate/atp-NAD kinase, domain 1"/>
    <property type="match status" value="1"/>
</dbReference>
<dbReference type="Gene3D" id="2.60.200.30">
    <property type="entry name" value="Probable inorganic polyphosphate/atp-NAD kinase, domain 2"/>
    <property type="match status" value="1"/>
</dbReference>
<dbReference type="HAMAP" id="MF_00361">
    <property type="entry name" value="NAD_kinase"/>
    <property type="match status" value="1"/>
</dbReference>
<dbReference type="InterPro" id="IPR017438">
    <property type="entry name" value="ATP-NAD_kinase_N"/>
</dbReference>
<dbReference type="InterPro" id="IPR017437">
    <property type="entry name" value="ATP-NAD_kinase_PpnK-typ_C"/>
</dbReference>
<dbReference type="InterPro" id="IPR016064">
    <property type="entry name" value="NAD/diacylglycerol_kinase_sf"/>
</dbReference>
<dbReference type="InterPro" id="IPR002504">
    <property type="entry name" value="NADK"/>
</dbReference>
<dbReference type="NCBIfam" id="NF002892">
    <property type="entry name" value="PRK03372.1"/>
    <property type="match status" value="1"/>
</dbReference>
<dbReference type="PANTHER" id="PTHR20275">
    <property type="entry name" value="NAD KINASE"/>
    <property type="match status" value="1"/>
</dbReference>
<dbReference type="PANTHER" id="PTHR20275:SF0">
    <property type="entry name" value="NAD KINASE"/>
    <property type="match status" value="1"/>
</dbReference>
<dbReference type="Pfam" id="PF01513">
    <property type="entry name" value="NAD_kinase"/>
    <property type="match status" value="1"/>
</dbReference>
<dbReference type="Pfam" id="PF20143">
    <property type="entry name" value="NAD_kinase_C"/>
    <property type="match status" value="1"/>
</dbReference>
<dbReference type="SUPFAM" id="SSF111331">
    <property type="entry name" value="NAD kinase/diacylglycerol kinase-like"/>
    <property type="match status" value="1"/>
</dbReference>
<protein>
    <recommendedName>
        <fullName evidence="1">NAD kinase</fullName>
        <ecNumber evidence="1">2.7.1.23</ecNumber>
    </recommendedName>
    <alternativeName>
        <fullName evidence="1">ATP-dependent NAD kinase</fullName>
    </alternativeName>
</protein>
<comment type="function">
    <text evidence="1">Involved in the regulation of the intracellular balance of NAD and NADP, and is a key enzyme in the biosynthesis of NADP. Catalyzes specifically the phosphorylation on 2'-hydroxyl of the adenosine moiety of NAD to yield NADP.</text>
</comment>
<comment type="catalytic activity">
    <reaction evidence="1">
        <text>NAD(+) + ATP = ADP + NADP(+) + H(+)</text>
        <dbReference type="Rhea" id="RHEA:18629"/>
        <dbReference type="ChEBI" id="CHEBI:15378"/>
        <dbReference type="ChEBI" id="CHEBI:30616"/>
        <dbReference type="ChEBI" id="CHEBI:57540"/>
        <dbReference type="ChEBI" id="CHEBI:58349"/>
        <dbReference type="ChEBI" id="CHEBI:456216"/>
        <dbReference type="EC" id="2.7.1.23"/>
    </reaction>
</comment>
<comment type="cofactor">
    <cofactor evidence="1">
        <name>a divalent metal cation</name>
        <dbReference type="ChEBI" id="CHEBI:60240"/>
    </cofactor>
</comment>
<comment type="subcellular location">
    <subcellularLocation>
        <location evidence="1">Cytoplasm</location>
    </subcellularLocation>
</comment>
<comment type="similarity">
    <text evidence="1">Belongs to the NAD kinase family.</text>
</comment>
<name>NADK_MYCPA</name>
<accession>Q740E9</accession>
<feature type="chain" id="PRO_0000229655" description="NAD kinase">
    <location>
        <begin position="1"/>
        <end position="308"/>
    </location>
</feature>
<feature type="active site" description="Proton acceptor" evidence="1">
    <location>
        <position position="86"/>
    </location>
</feature>
<feature type="binding site" evidence="1">
    <location>
        <begin position="86"/>
        <end position="87"/>
    </location>
    <ligand>
        <name>NAD(+)</name>
        <dbReference type="ChEBI" id="CHEBI:57540"/>
    </ligand>
</feature>
<feature type="binding site" evidence="1">
    <location>
        <position position="91"/>
    </location>
    <ligand>
        <name>NAD(+)</name>
        <dbReference type="ChEBI" id="CHEBI:57540"/>
    </ligand>
</feature>
<feature type="binding site" evidence="1">
    <location>
        <begin position="160"/>
        <end position="161"/>
    </location>
    <ligand>
        <name>NAD(+)</name>
        <dbReference type="ChEBI" id="CHEBI:57540"/>
    </ligand>
</feature>
<feature type="binding site" evidence="1">
    <location>
        <position position="190"/>
    </location>
    <ligand>
        <name>NAD(+)</name>
        <dbReference type="ChEBI" id="CHEBI:57540"/>
    </ligand>
</feature>
<feature type="binding site" evidence="1">
    <location>
        <begin position="201"/>
        <end position="206"/>
    </location>
    <ligand>
        <name>NAD(+)</name>
        <dbReference type="ChEBI" id="CHEBI:57540"/>
    </ligand>
</feature>
<reference key="1">
    <citation type="journal article" date="2005" name="Proc. Natl. Acad. Sci. U.S.A.">
        <title>The complete genome sequence of Mycobacterium avium subspecies paratuberculosis.</title>
        <authorList>
            <person name="Li L."/>
            <person name="Bannantine J.P."/>
            <person name="Zhang Q."/>
            <person name="Amonsin A."/>
            <person name="May B.J."/>
            <person name="Alt D."/>
            <person name="Banerji N."/>
            <person name="Kanjilal S."/>
            <person name="Kapur V."/>
        </authorList>
    </citation>
    <scope>NUCLEOTIDE SEQUENCE [LARGE SCALE GENOMIC DNA]</scope>
    <source>
        <strain>ATCC BAA-968 / K-10</strain>
    </source>
</reference>
<keyword id="KW-0067">ATP-binding</keyword>
<keyword id="KW-0963">Cytoplasm</keyword>
<keyword id="KW-0418">Kinase</keyword>
<keyword id="KW-0520">NAD</keyword>
<keyword id="KW-0521">NADP</keyword>
<keyword id="KW-0547">Nucleotide-binding</keyword>
<keyword id="KW-1185">Reference proteome</keyword>
<keyword id="KW-0808">Transferase</keyword>